<name>YIDD_SYNFM</name>
<gene>
    <name type="ordered locus">Sfum_2596</name>
</gene>
<organism>
    <name type="scientific">Syntrophobacter fumaroxidans (strain DSM 10017 / MPOB)</name>
    <dbReference type="NCBI Taxonomy" id="335543"/>
    <lineage>
        <taxon>Bacteria</taxon>
        <taxon>Pseudomonadati</taxon>
        <taxon>Thermodesulfobacteriota</taxon>
        <taxon>Syntrophobacteria</taxon>
        <taxon>Syntrophobacterales</taxon>
        <taxon>Syntrophobacteraceae</taxon>
        <taxon>Syntrophobacter</taxon>
    </lineage>
</organism>
<accession>A0LLH2</accession>
<dbReference type="EMBL" id="CP000478">
    <property type="protein sequence ID" value="ABK18274.1"/>
    <property type="molecule type" value="Genomic_DNA"/>
</dbReference>
<dbReference type="RefSeq" id="WP_011699442.1">
    <property type="nucleotide sequence ID" value="NC_008554.1"/>
</dbReference>
<dbReference type="FunCoup" id="A0LLH2">
    <property type="interactions" value="294"/>
</dbReference>
<dbReference type="STRING" id="335543.Sfum_2596"/>
<dbReference type="KEGG" id="sfu:Sfum_2596"/>
<dbReference type="eggNOG" id="COG0759">
    <property type="taxonomic scope" value="Bacteria"/>
</dbReference>
<dbReference type="HOGENOM" id="CLU_144811_5_2_7"/>
<dbReference type="InParanoid" id="A0LLH2"/>
<dbReference type="OrthoDB" id="9801753at2"/>
<dbReference type="Proteomes" id="UP000001784">
    <property type="component" value="Chromosome"/>
</dbReference>
<dbReference type="GO" id="GO:0005886">
    <property type="term" value="C:plasma membrane"/>
    <property type="evidence" value="ECO:0007669"/>
    <property type="project" value="UniProtKB-SubCell"/>
</dbReference>
<dbReference type="HAMAP" id="MF_00386">
    <property type="entry name" value="UPF0161_YidD"/>
    <property type="match status" value="1"/>
</dbReference>
<dbReference type="InterPro" id="IPR002696">
    <property type="entry name" value="Membr_insert_effic_factor_YidD"/>
</dbReference>
<dbReference type="NCBIfam" id="TIGR00278">
    <property type="entry name" value="membrane protein insertion efficiency factor YidD"/>
    <property type="match status" value="1"/>
</dbReference>
<dbReference type="PANTHER" id="PTHR33383">
    <property type="entry name" value="MEMBRANE PROTEIN INSERTION EFFICIENCY FACTOR-RELATED"/>
    <property type="match status" value="1"/>
</dbReference>
<dbReference type="PANTHER" id="PTHR33383:SF1">
    <property type="entry name" value="MEMBRANE PROTEIN INSERTION EFFICIENCY FACTOR-RELATED"/>
    <property type="match status" value="1"/>
</dbReference>
<dbReference type="Pfam" id="PF01809">
    <property type="entry name" value="YidD"/>
    <property type="match status" value="1"/>
</dbReference>
<dbReference type="SMART" id="SM01234">
    <property type="entry name" value="Haemolytic"/>
    <property type="match status" value="1"/>
</dbReference>
<feature type="chain" id="PRO_1000060730" description="Putative membrane protein insertion efficiency factor">
    <location>
        <begin position="1"/>
        <end position="80"/>
    </location>
</feature>
<evidence type="ECO:0000255" key="1">
    <source>
        <dbReference type="HAMAP-Rule" id="MF_00386"/>
    </source>
</evidence>
<protein>
    <recommendedName>
        <fullName evidence="1">Putative membrane protein insertion efficiency factor</fullName>
    </recommendedName>
</protein>
<sequence>MIRSIFLGLIRFYQIVLSPLKGPRCRFLPTCSQYAYEAIERYGIWRGLFLGGKRLLRCHPFHAGGYDPVPRPSANNHPSR</sequence>
<proteinExistence type="inferred from homology"/>
<reference key="1">
    <citation type="submission" date="2006-10" db="EMBL/GenBank/DDBJ databases">
        <title>Complete sequence of Syntrophobacter fumaroxidans MPOB.</title>
        <authorList>
            <consortium name="US DOE Joint Genome Institute"/>
            <person name="Copeland A."/>
            <person name="Lucas S."/>
            <person name="Lapidus A."/>
            <person name="Barry K."/>
            <person name="Detter J.C."/>
            <person name="Glavina del Rio T."/>
            <person name="Hammon N."/>
            <person name="Israni S."/>
            <person name="Pitluck S."/>
            <person name="Goltsman E.G."/>
            <person name="Martinez M."/>
            <person name="Schmutz J."/>
            <person name="Larimer F."/>
            <person name="Land M."/>
            <person name="Hauser L."/>
            <person name="Kyrpides N."/>
            <person name="Kim E."/>
            <person name="Boone D.R."/>
            <person name="Brockman F."/>
            <person name="Culley D."/>
            <person name="Ferry J."/>
            <person name="Gunsalus R."/>
            <person name="McInerney M.J."/>
            <person name="Morrison M."/>
            <person name="Plugge C."/>
            <person name="Rohlin L."/>
            <person name="Scholten J."/>
            <person name="Sieber J."/>
            <person name="Stams A.J.M."/>
            <person name="Worm P."/>
            <person name="Henstra A.M."/>
            <person name="Richardson P."/>
        </authorList>
    </citation>
    <scope>NUCLEOTIDE SEQUENCE [LARGE SCALE GENOMIC DNA]</scope>
    <source>
        <strain>DSM 10017 / MPOB</strain>
    </source>
</reference>
<keyword id="KW-0997">Cell inner membrane</keyword>
<keyword id="KW-1003">Cell membrane</keyword>
<keyword id="KW-0472">Membrane</keyword>
<keyword id="KW-1185">Reference proteome</keyword>
<comment type="function">
    <text evidence="1">Could be involved in insertion of integral membrane proteins into the membrane.</text>
</comment>
<comment type="subcellular location">
    <subcellularLocation>
        <location evidence="1">Cell inner membrane</location>
        <topology evidence="1">Peripheral membrane protein</topology>
        <orientation evidence="1">Cytoplasmic side</orientation>
    </subcellularLocation>
</comment>
<comment type="similarity">
    <text evidence="1">Belongs to the UPF0161 family.</text>
</comment>